<evidence type="ECO:0000255" key="1"/>
<evidence type="ECO:0000305" key="2"/>
<organism>
    <name type="scientific">Bacillus subtilis (strain 168)</name>
    <dbReference type="NCBI Taxonomy" id="224308"/>
    <lineage>
        <taxon>Bacteria</taxon>
        <taxon>Bacillati</taxon>
        <taxon>Bacillota</taxon>
        <taxon>Bacilli</taxon>
        <taxon>Bacillales</taxon>
        <taxon>Bacillaceae</taxon>
        <taxon>Bacillus</taxon>
    </lineage>
</organism>
<sequence length="448" mass="46655">MPLIIVALGILALLFLIMGLKLNTFISLLVVSFGVALALGMPFDKVVSSIEAGIGGTLGHIALIFGLGAMLGKLIADSGGAQRIAMTLVNKFGEKNIQWAVVIASFIIGIALFFEVGLVLLIPIVFAISRELKISILFLGIPMVAALSVTHGFLPPHPGPTAIAGEYGANIGEVLLYGFIVAVPTVLIAGPLFTKFAKKIVPASFAKNGNIASLGTQKTFNLEETPGFGISVFTAMLPIIIMSVATIIDLLQETIGFADNGVLAFIRLIGNASTAMIISLLVAVYTMGIKRNIPVKTVMDSCSTAISQIGMMLLIIGGGGAFKQVLINGGVGDYVADLFKGTALSPIILAWLIAAILRISLGSATVAALSTTGLVIPLLGHSDVNLALVVLATGAGSVIASHVNDAGFWMFKEYFGLSMKETFATWTLLETIISVAGLGFILLLSLVV</sequence>
<feature type="chain" id="PRO_0000061931" description="Gluconate permease">
    <location>
        <begin position="1"/>
        <end position="448"/>
    </location>
</feature>
<feature type="transmembrane region" description="Helical" evidence="1">
    <location>
        <begin position="2"/>
        <end position="22"/>
    </location>
</feature>
<feature type="transmembrane region" description="Helical" evidence="1">
    <location>
        <begin position="23"/>
        <end position="43"/>
    </location>
</feature>
<feature type="transmembrane region" description="Helical" evidence="1">
    <location>
        <begin position="52"/>
        <end position="72"/>
    </location>
</feature>
<feature type="transmembrane region" description="Helical" evidence="1">
    <location>
        <begin position="106"/>
        <end position="126"/>
    </location>
</feature>
<feature type="transmembrane region" description="Helical" evidence="1">
    <location>
        <begin position="134"/>
        <end position="154"/>
    </location>
</feature>
<feature type="transmembrane region" description="Helical" evidence="1">
    <location>
        <begin position="174"/>
        <end position="194"/>
    </location>
</feature>
<feature type="transmembrane region" description="Helical" evidence="1">
    <location>
        <begin position="228"/>
        <end position="248"/>
    </location>
</feature>
<feature type="transmembrane region" description="Helical" evidence="1">
    <location>
        <begin position="269"/>
        <end position="289"/>
    </location>
</feature>
<feature type="transmembrane region" description="Helical" evidence="1">
    <location>
        <begin position="302"/>
        <end position="322"/>
    </location>
</feature>
<feature type="transmembrane region" description="Helical" evidence="1">
    <location>
        <begin position="347"/>
        <end position="367"/>
    </location>
</feature>
<feature type="transmembrane region" description="Helical" evidence="1">
    <location>
        <begin position="373"/>
        <end position="393"/>
    </location>
</feature>
<feature type="transmembrane region" description="Helical" evidence="1">
    <location>
        <begin position="428"/>
        <end position="448"/>
    </location>
</feature>
<reference key="1">
    <citation type="journal article" date="1986" name="J. Biol. Chem.">
        <title>Organization and transcription of the gluconate operon, gnt, of Bacillus subtilis.</title>
        <authorList>
            <person name="Fujita Y."/>
            <person name="Fujita T."/>
            <person name="Miwa Y."/>
            <person name="Nihashi J."/>
            <person name="Aratani Y."/>
        </authorList>
    </citation>
    <scope>NUCLEOTIDE SEQUENCE [GENOMIC DNA]</scope>
</reference>
<reference key="2">
    <citation type="journal article" date="1995" name="DNA Res.">
        <title>Cloning and sequencing of a 36-kb region of the Bacillus subtilis genome between the gnt and iol operons.</title>
        <authorList>
            <person name="Yoshida K."/>
            <person name="Seki S."/>
            <person name="Fujimura M."/>
            <person name="Miwa Y."/>
            <person name="Fujita Y."/>
        </authorList>
    </citation>
    <scope>NUCLEOTIDE SEQUENCE [GENOMIC DNA]</scope>
    <source>
        <strain>168 / BGSC1A1</strain>
    </source>
</reference>
<reference key="3">
    <citation type="journal article" date="1997" name="Nature">
        <title>The complete genome sequence of the Gram-positive bacterium Bacillus subtilis.</title>
        <authorList>
            <person name="Kunst F."/>
            <person name="Ogasawara N."/>
            <person name="Moszer I."/>
            <person name="Albertini A.M."/>
            <person name="Alloni G."/>
            <person name="Azevedo V."/>
            <person name="Bertero M.G."/>
            <person name="Bessieres P."/>
            <person name="Bolotin A."/>
            <person name="Borchert S."/>
            <person name="Borriss R."/>
            <person name="Boursier L."/>
            <person name="Brans A."/>
            <person name="Braun M."/>
            <person name="Brignell S.C."/>
            <person name="Bron S."/>
            <person name="Brouillet S."/>
            <person name="Bruschi C.V."/>
            <person name="Caldwell B."/>
            <person name="Capuano V."/>
            <person name="Carter N.M."/>
            <person name="Choi S.-K."/>
            <person name="Codani J.-J."/>
            <person name="Connerton I.F."/>
            <person name="Cummings N.J."/>
            <person name="Daniel R.A."/>
            <person name="Denizot F."/>
            <person name="Devine K.M."/>
            <person name="Duesterhoeft A."/>
            <person name="Ehrlich S.D."/>
            <person name="Emmerson P.T."/>
            <person name="Entian K.-D."/>
            <person name="Errington J."/>
            <person name="Fabret C."/>
            <person name="Ferrari E."/>
            <person name="Foulger D."/>
            <person name="Fritz C."/>
            <person name="Fujita M."/>
            <person name="Fujita Y."/>
            <person name="Fuma S."/>
            <person name="Galizzi A."/>
            <person name="Galleron N."/>
            <person name="Ghim S.-Y."/>
            <person name="Glaser P."/>
            <person name="Goffeau A."/>
            <person name="Golightly E.J."/>
            <person name="Grandi G."/>
            <person name="Guiseppi G."/>
            <person name="Guy B.J."/>
            <person name="Haga K."/>
            <person name="Haiech J."/>
            <person name="Harwood C.R."/>
            <person name="Henaut A."/>
            <person name="Hilbert H."/>
            <person name="Holsappel S."/>
            <person name="Hosono S."/>
            <person name="Hullo M.-F."/>
            <person name="Itaya M."/>
            <person name="Jones L.-M."/>
            <person name="Joris B."/>
            <person name="Karamata D."/>
            <person name="Kasahara Y."/>
            <person name="Klaerr-Blanchard M."/>
            <person name="Klein C."/>
            <person name="Kobayashi Y."/>
            <person name="Koetter P."/>
            <person name="Koningstein G."/>
            <person name="Krogh S."/>
            <person name="Kumano M."/>
            <person name="Kurita K."/>
            <person name="Lapidus A."/>
            <person name="Lardinois S."/>
            <person name="Lauber J."/>
            <person name="Lazarevic V."/>
            <person name="Lee S.-M."/>
            <person name="Levine A."/>
            <person name="Liu H."/>
            <person name="Masuda S."/>
            <person name="Mauel C."/>
            <person name="Medigue C."/>
            <person name="Medina N."/>
            <person name="Mellado R.P."/>
            <person name="Mizuno M."/>
            <person name="Moestl D."/>
            <person name="Nakai S."/>
            <person name="Noback M."/>
            <person name="Noone D."/>
            <person name="O'Reilly M."/>
            <person name="Ogawa K."/>
            <person name="Ogiwara A."/>
            <person name="Oudega B."/>
            <person name="Park S.-H."/>
            <person name="Parro V."/>
            <person name="Pohl T.M."/>
            <person name="Portetelle D."/>
            <person name="Porwollik S."/>
            <person name="Prescott A.M."/>
            <person name="Presecan E."/>
            <person name="Pujic P."/>
            <person name="Purnelle B."/>
            <person name="Rapoport G."/>
            <person name="Rey M."/>
            <person name="Reynolds S."/>
            <person name="Rieger M."/>
            <person name="Rivolta C."/>
            <person name="Rocha E."/>
            <person name="Roche B."/>
            <person name="Rose M."/>
            <person name="Sadaie Y."/>
            <person name="Sato T."/>
            <person name="Scanlan E."/>
            <person name="Schleich S."/>
            <person name="Schroeter R."/>
            <person name="Scoffone F."/>
            <person name="Sekiguchi J."/>
            <person name="Sekowska A."/>
            <person name="Seror S.J."/>
            <person name="Serror P."/>
            <person name="Shin B.-S."/>
            <person name="Soldo B."/>
            <person name="Sorokin A."/>
            <person name="Tacconi E."/>
            <person name="Takagi T."/>
            <person name="Takahashi H."/>
            <person name="Takemaru K."/>
            <person name="Takeuchi M."/>
            <person name="Tamakoshi A."/>
            <person name="Tanaka T."/>
            <person name="Terpstra P."/>
            <person name="Tognoni A."/>
            <person name="Tosato V."/>
            <person name="Uchiyama S."/>
            <person name="Vandenbol M."/>
            <person name="Vannier F."/>
            <person name="Vassarotti A."/>
            <person name="Viari A."/>
            <person name="Wambutt R."/>
            <person name="Wedler E."/>
            <person name="Wedler H."/>
            <person name="Weitzenegger T."/>
            <person name="Winters P."/>
            <person name="Wipat A."/>
            <person name="Yamamoto H."/>
            <person name="Yamane K."/>
            <person name="Yasumoto K."/>
            <person name="Yata K."/>
            <person name="Yoshida K."/>
            <person name="Yoshikawa H.-F."/>
            <person name="Zumstein E."/>
            <person name="Yoshikawa H."/>
            <person name="Danchin A."/>
        </authorList>
    </citation>
    <scope>NUCLEOTIDE SEQUENCE [LARGE SCALE GENOMIC DNA]</scope>
    <source>
        <strain>168</strain>
    </source>
</reference>
<protein>
    <recommendedName>
        <fullName>Gluconate permease</fullName>
    </recommendedName>
</protein>
<gene>
    <name type="primary">gntP</name>
    <name type="ordered locus">BSU40070</name>
</gene>
<accession>P12012</accession>
<proteinExistence type="inferred from homology"/>
<name>GNTP_BACSU</name>
<keyword id="KW-1003">Cell membrane</keyword>
<keyword id="KW-0311">Gluconate utilization</keyword>
<keyword id="KW-0472">Membrane</keyword>
<keyword id="KW-1185">Reference proteome</keyword>
<keyword id="KW-0762">Sugar transport</keyword>
<keyword id="KW-0812">Transmembrane</keyword>
<keyword id="KW-1133">Transmembrane helix</keyword>
<keyword id="KW-0813">Transport</keyword>
<comment type="pathway">
    <text>Carbohydrate acid metabolism; D-gluconate degradation.</text>
</comment>
<comment type="subcellular location">
    <subcellularLocation>
        <location>Cell membrane</location>
        <topology>Multi-pass membrane protein</topology>
    </subcellularLocation>
</comment>
<comment type="similarity">
    <text evidence="2">Belongs to the GntP permease family.</text>
</comment>
<dbReference type="EMBL" id="J02584">
    <property type="protein sequence ID" value="AAA56926.1"/>
    <property type="molecule type" value="Genomic_DNA"/>
</dbReference>
<dbReference type="EMBL" id="AB005554">
    <property type="protein sequence ID" value="BAA21577.1"/>
    <property type="molecule type" value="Genomic_DNA"/>
</dbReference>
<dbReference type="EMBL" id="AL009126">
    <property type="protein sequence ID" value="CAB16044.1"/>
    <property type="molecule type" value="Genomic_DNA"/>
</dbReference>
<dbReference type="PIR" id="A26190">
    <property type="entry name" value="A26190"/>
</dbReference>
<dbReference type="RefSeq" id="NP_391887.1">
    <property type="nucleotide sequence ID" value="NC_000964.3"/>
</dbReference>
<dbReference type="RefSeq" id="WP_003243139.1">
    <property type="nucleotide sequence ID" value="NZ_OZ025638.1"/>
</dbReference>
<dbReference type="SMR" id="P12012"/>
<dbReference type="FunCoup" id="P12012">
    <property type="interactions" value="58"/>
</dbReference>
<dbReference type="STRING" id="224308.BSU40070"/>
<dbReference type="TCDB" id="2.A.8.1.1">
    <property type="family name" value="the gluconate:h(+) symporter (gntp) family"/>
</dbReference>
<dbReference type="PaxDb" id="224308-BSU40070"/>
<dbReference type="DNASU" id="937715"/>
<dbReference type="EnsemblBacteria" id="CAB16044">
    <property type="protein sequence ID" value="CAB16044"/>
    <property type="gene ID" value="BSU_40070"/>
</dbReference>
<dbReference type="GeneID" id="937715"/>
<dbReference type="KEGG" id="bsu:BSU40070"/>
<dbReference type="PATRIC" id="fig|224308.179.peg.4334"/>
<dbReference type="eggNOG" id="COG2610">
    <property type="taxonomic scope" value="Bacteria"/>
</dbReference>
<dbReference type="InParanoid" id="P12012"/>
<dbReference type="OrthoDB" id="9787129at2"/>
<dbReference type="PhylomeDB" id="P12012"/>
<dbReference type="BioCyc" id="BSUB:BSU40070-MONOMER"/>
<dbReference type="UniPathway" id="UPA00792"/>
<dbReference type="Proteomes" id="UP000001570">
    <property type="component" value="Chromosome"/>
</dbReference>
<dbReference type="GO" id="GO:0005886">
    <property type="term" value="C:plasma membrane"/>
    <property type="evidence" value="ECO:0000318"/>
    <property type="project" value="GO_Central"/>
</dbReference>
<dbReference type="GO" id="GO:0015128">
    <property type="term" value="F:gluconate transmembrane transporter activity"/>
    <property type="evidence" value="ECO:0000318"/>
    <property type="project" value="GO_Central"/>
</dbReference>
<dbReference type="GO" id="GO:0019521">
    <property type="term" value="P:D-gluconate metabolic process"/>
    <property type="evidence" value="ECO:0007669"/>
    <property type="project" value="UniProtKB-KW"/>
</dbReference>
<dbReference type="GO" id="GO:0035429">
    <property type="term" value="P:gluconate transmembrane transport"/>
    <property type="evidence" value="ECO:0000318"/>
    <property type="project" value="GO_Central"/>
</dbReference>
<dbReference type="InterPro" id="IPR003474">
    <property type="entry name" value="Glcn_transporter"/>
</dbReference>
<dbReference type="NCBIfam" id="TIGR00791">
    <property type="entry name" value="gntP"/>
    <property type="match status" value="1"/>
</dbReference>
<dbReference type="PANTHER" id="PTHR30354">
    <property type="entry name" value="GNT FAMILY GLUCONATE TRANSPORTER"/>
    <property type="match status" value="1"/>
</dbReference>
<dbReference type="PANTHER" id="PTHR30354:SF22">
    <property type="entry name" value="HIGH-AFFINITY GLUCONATE TRANSPORTER"/>
    <property type="match status" value="1"/>
</dbReference>
<dbReference type="Pfam" id="PF02447">
    <property type="entry name" value="GntP_permease"/>
    <property type="match status" value="1"/>
</dbReference>
<dbReference type="PIRSF" id="PIRSF002746">
    <property type="entry name" value="Gluconate_transporter"/>
    <property type="match status" value="1"/>
</dbReference>